<name>AROE_RHOPA</name>
<dbReference type="EC" id="1.1.1.25" evidence="1"/>
<dbReference type="EMBL" id="BX572606">
    <property type="protein sequence ID" value="CAE29766.1"/>
    <property type="molecule type" value="Genomic_DNA"/>
</dbReference>
<dbReference type="RefSeq" id="WP_011159859.1">
    <property type="nucleotide sequence ID" value="NZ_CP116810.1"/>
</dbReference>
<dbReference type="SMR" id="Q6N1S9"/>
<dbReference type="STRING" id="258594.RPA4325"/>
<dbReference type="GeneID" id="66895455"/>
<dbReference type="eggNOG" id="COG0169">
    <property type="taxonomic scope" value="Bacteria"/>
</dbReference>
<dbReference type="HOGENOM" id="CLU_044063_2_0_5"/>
<dbReference type="PhylomeDB" id="Q6N1S9"/>
<dbReference type="UniPathway" id="UPA00053">
    <property type="reaction ID" value="UER00087"/>
</dbReference>
<dbReference type="GO" id="GO:0005829">
    <property type="term" value="C:cytosol"/>
    <property type="evidence" value="ECO:0007669"/>
    <property type="project" value="TreeGrafter"/>
</dbReference>
<dbReference type="GO" id="GO:0050661">
    <property type="term" value="F:NADP binding"/>
    <property type="evidence" value="ECO:0007669"/>
    <property type="project" value="InterPro"/>
</dbReference>
<dbReference type="GO" id="GO:0004764">
    <property type="term" value="F:shikimate 3-dehydrogenase (NADP+) activity"/>
    <property type="evidence" value="ECO:0007669"/>
    <property type="project" value="UniProtKB-UniRule"/>
</dbReference>
<dbReference type="GO" id="GO:0008652">
    <property type="term" value="P:amino acid biosynthetic process"/>
    <property type="evidence" value="ECO:0007669"/>
    <property type="project" value="UniProtKB-KW"/>
</dbReference>
<dbReference type="GO" id="GO:0009073">
    <property type="term" value="P:aromatic amino acid family biosynthetic process"/>
    <property type="evidence" value="ECO:0007669"/>
    <property type="project" value="UniProtKB-KW"/>
</dbReference>
<dbReference type="GO" id="GO:0009423">
    <property type="term" value="P:chorismate biosynthetic process"/>
    <property type="evidence" value="ECO:0007669"/>
    <property type="project" value="UniProtKB-UniRule"/>
</dbReference>
<dbReference type="GO" id="GO:0019632">
    <property type="term" value="P:shikimate metabolic process"/>
    <property type="evidence" value="ECO:0007669"/>
    <property type="project" value="InterPro"/>
</dbReference>
<dbReference type="CDD" id="cd01065">
    <property type="entry name" value="NAD_bind_Shikimate_DH"/>
    <property type="match status" value="1"/>
</dbReference>
<dbReference type="Gene3D" id="3.40.50.10860">
    <property type="entry name" value="Leucine Dehydrogenase, chain A, domain 1"/>
    <property type="match status" value="1"/>
</dbReference>
<dbReference type="Gene3D" id="3.40.50.720">
    <property type="entry name" value="NAD(P)-binding Rossmann-like Domain"/>
    <property type="match status" value="1"/>
</dbReference>
<dbReference type="HAMAP" id="MF_00222">
    <property type="entry name" value="Shikimate_DH_AroE"/>
    <property type="match status" value="1"/>
</dbReference>
<dbReference type="InterPro" id="IPR046346">
    <property type="entry name" value="Aminoacid_DH-like_N_sf"/>
</dbReference>
<dbReference type="InterPro" id="IPR036291">
    <property type="entry name" value="NAD(P)-bd_dom_sf"/>
</dbReference>
<dbReference type="InterPro" id="IPR041121">
    <property type="entry name" value="SDH_C"/>
</dbReference>
<dbReference type="InterPro" id="IPR011342">
    <property type="entry name" value="Shikimate_DH"/>
</dbReference>
<dbReference type="InterPro" id="IPR013708">
    <property type="entry name" value="Shikimate_DH-bd_N"/>
</dbReference>
<dbReference type="InterPro" id="IPR022893">
    <property type="entry name" value="Shikimate_DH_fam"/>
</dbReference>
<dbReference type="InterPro" id="IPR006151">
    <property type="entry name" value="Shikm_DH/Glu-tRNA_Rdtase"/>
</dbReference>
<dbReference type="NCBIfam" id="TIGR00507">
    <property type="entry name" value="aroE"/>
    <property type="match status" value="1"/>
</dbReference>
<dbReference type="NCBIfam" id="NF001312">
    <property type="entry name" value="PRK00258.1-4"/>
    <property type="match status" value="1"/>
</dbReference>
<dbReference type="PANTHER" id="PTHR21089:SF1">
    <property type="entry name" value="BIFUNCTIONAL 3-DEHYDROQUINATE DEHYDRATASE_SHIKIMATE DEHYDROGENASE, CHLOROPLASTIC"/>
    <property type="match status" value="1"/>
</dbReference>
<dbReference type="PANTHER" id="PTHR21089">
    <property type="entry name" value="SHIKIMATE DEHYDROGENASE"/>
    <property type="match status" value="1"/>
</dbReference>
<dbReference type="Pfam" id="PF18317">
    <property type="entry name" value="SDH_C"/>
    <property type="match status" value="1"/>
</dbReference>
<dbReference type="Pfam" id="PF01488">
    <property type="entry name" value="Shikimate_DH"/>
    <property type="match status" value="1"/>
</dbReference>
<dbReference type="Pfam" id="PF08501">
    <property type="entry name" value="Shikimate_dh_N"/>
    <property type="match status" value="1"/>
</dbReference>
<dbReference type="SUPFAM" id="SSF53223">
    <property type="entry name" value="Aminoacid dehydrogenase-like, N-terminal domain"/>
    <property type="match status" value="1"/>
</dbReference>
<dbReference type="SUPFAM" id="SSF51735">
    <property type="entry name" value="NAD(P)-binding Rossmann-fold domains"/>
    <property type="match status" value="1"/>
</dbReference>
<gene>
    <name evidence="1" type="primary">aroE</name>
    <name type="ordered locus">RPA4325</name>
</gene>
<comment type="function">
    <text evidence="1">Involved in the biosynthesis of the chorismate, which leads to the biosynthesis of aromatic amino acids. Catalyzes the reversible NADPH linked reduction of 3-dehydroshikimate (DHSA) to yield shikimate (SA).</text>
</comment>
<comment type="catalytic activity">
    <reaction evidence="1">
        <text>shikimate + NADP(+) = 3-dehydroshikimate + NADPH + H(+)</text>
        <dbReference type="Rhea" id="RHEA:17737"/>
        <dbReference type="ChEBI" id="CHEBI:15378"/>
        <dbReference type="ChEBI" id="CHEBI:16630"/>
        <dbReference type="ChEBI" id="CHEBI:36208"/>
        <dbReference type="ChEBI" id="CHEBI:57783"/>
        <dbReference type="ChEBI" id="CHEBI:58349"/>
        <dbReference type="EC" id="1.1.1.25"/>
    </reaction>
</comment>
<comment type="pathway">
    <text evidence="1">Metabolic intermediate biosynthesis; chorismate biosynthesis; chorismate from D-erythrose 4-phosphate and phosphoenolpyruvate: step 4/7.</text>
</comment>
<comment type="subunit">
    <text evidence="1">Homodimer.</text>
</comment>
<comment type="similarity">
    <text evidence="1">Belongs to the shikimate dehydrogenase family.</text>
</comment>
<organism>
    <name type="scientific">Rhodopseudomonas palustris (strain ATCC BAA-98 / CGA009)</name>
    <dbReference type="NCBI Taxonomy" id="258594"/>
    <lineage>
        <taxon>Bacteria</taxon>
        <taxon>Pseudomonadati</taxon>
        <taxon>Pseudomonadota</taxon>
        <taxon>Alphaproteobacteria</taxon>
        <taxon>Hyphomicrobiales</taxon>
        <taxon>Nitrobacteraceae</taxon>
        <taxon>Rhodopseudomonas</taxon>
    </lineage>
</organism>
<accession>Q6N1S9</accession>
<proteinExistence type="inferred from homology"/>
<keyword id="KW-0028">Amino-acid biosynthesis</keyword>
<keyword id="KW-0057">Aromatic amino acid biosynthesis</keyword>
<keyword id="KW-0521">NADP</keyword>
<keyword id="KW-0560">Oxidoreductase</keyword>
<sequence length="278" mass="29554">MAATKRAACLIGCPAAHSRSPLIHHYWLRQLGIEGGYSIEAVPPEGFAEFVLHLKTHGYVGANVTIPHKERALQLTEPDERACAVGAANTLYYDGDLLRSTNTDIEGFIGNLDASAPGWDRSAHALVLGAGGSSRAVVFGLLERGVQRIALANRSIERAQALRDLFGERVVPIAWSDIPAALPGAGLLVNTTSLGMKGQPPLQIDLSALPADAVVSDLVYVPLETDLLAAAKARGLRTADGLGMLLHQAVRGFDLWFGARPHVTPELRALVEADLAPK</sequence>
<feature type="chain" id="PRO_1000021322" description="Shikimate dehydrogenase (NADP(+))">
    <location>
        <begin position="1"/>
        <end position="278"/>
    </location>
</feature>
<feature type="active site" description="Proton acceptor" evidence="1">
    <location>
        <position position="69"/>
    </location>
</feature>
<feature type="binding site" evidence="1">
    <location>
        <begin position="18"/>
        <end position="20"/>
    </location>
    <ligand>
        <name>shikimate</name>
        <dbReference type="ChEBI" id="CHEBI:36208"/>
    </ligand>
</feature>
<feature type="binding site" evidence="1">
    <location>
        <position position="65"/>
    </location>
    <ligand>
        <name>shikimate</name>
        <dbReference type="ChEBI" id="CHEBI:36208"/>
    </ligand>
</feature>
<feature type="binding site" evidence="1">
    <location>
        <position position="80"/>
    </location>
    <ligand>
        <name>NADP(+)</name>
        <dbReference type="ChEBI" id="CHEBI:58349"/>
    </ligand>
</feature>
<feature type="binding site" evidence="1">
    <location>
        <position position="89"/>
    </location>
    <ligand>
        <name>shikimate</name>
        <dbReference type="ChEBI" id="CHEBI:36208"/>
    </ligand>
</feature>
<feature type="binding site" evidence="1">
    <location>
        <position position="104"/>
    </location>
    <ligand>
        <name>shikimate</name>
        <dbReference type="ChEBI" id="CHEBI:36208"/>
    </ligand>
</feature>
<feature type="binding site" evidence="1">
    <location>
        <begin position="129"/>
        <end position="133"/>
    </location>
    <ligand>
        <name>NADP(+)</name>
        <dbReference type="ChEBI" id="CHEBI:58349"/>
    </ligand>
</feature>
<feature type="binding site" evidence="1">
    <location>
        <position position="218"/>
    </location>
    <ligand>
        <name>NADP(+)</name>
        <dbReference type="ChEBI" id="CHEBI:58349"/>
    </ligand>
</feature>
<feature type="binding site" evidence="1">
    <location>
        <position position="220"/>
    </location>
    <ligand>
        <name>shikimate</name>
        <dbReference type="ChEBI" id="CHEBI:36208"/>
    </ligand>
</feature>
<feature type="binding site" evidence="1">
    <location>
        <position position="241"/>
    </location>
    <ligand>
        <name>NADP(+)</name>
        <dbReference type="ChEBI" id="CHEBI:58349"/>
    </ligand>
</feature>
<protein>
    <recommendedName>
        <fullName evidence="1">Shikimate dehydrogenase (NADP(+))</fullName>
        <shortName evidence="1">SDH</shortName>
        <ecNumber evidence="1">1.1.1.25</ecNumber>
    </recommendedName>
</protein>
<evidence type="ECO:0000255" key="1">
    <source>
        <dbReference type="HAMAP-Rule" id="MF_00222"/>
    </source>
</evidence>
<reference key="1">
    <citation type="journal article" date="2004" name="Nat. Biotechnol.">
        <title>Complete genome sequence of the metabolically versatile photosynthetic bacterium Rhodopseudomonas palustris.</title>
        <authorList>
            <person name="Larimer F.W."/>
            <person name="Chain P."/>
            <person name="Hauser L."/>
            <person name="Lamerdin J.E."/>
            <person name="Malfatti S."/>
            <person name="Do L."/>
            <person name="Land M.L."/>
            <person name="Pelletier D.A."/>
            <person name="Beatty J.T."/>
            <person name="Lang A.S."/>
            <person name="Tabita F.R."/>
            <person name="Gibson J.L."/>
            <person name="Hanson T.E."/>
            <person name="Bobst C."/>
            <person name="Torres y Torres J.L."/>
            <person name="Peres C."/>
            <person name="Harrison F.H."/>
            <person name="Gibson J."/>
            <person name="Harwood C.S."/>
        </authorList>
    </citation>
    <scope>NUCLEOTIDE SEQUENCE [LARGE SCALE GENOMIC DNA]</scope>
    <source>
        <strain>ATCC BAA-98 / CGA009</strain>
    </source>
</reference>